<reference key="1">
    <citation type="journal article" date="2002" name="Nucleic Acids Res.">
        <title>Genome sequence of Oceanobacillus iheyensis isolated from the Iheya Ridge and its unexpected adaptive capabilities to extreme environments.</title>
        <authorList>
            <person name="Takami H."/>
            <person name="Takaki Y."/>
            <person name="Uchiyama I."/>
        </authorList>
    </citation>
    <scope>NUCLEOTIDE SEQUENCE [LARGE SCALE GENOMIC DNA]</scope>
    <source>
        <strain>DSM 14371 / CIP 107618 / JCM 11309 / KCTC 3954 / HTE831</strain>
    </source>
</reference>
<protein>
    <recommendedName>
        <fullName evidence="1">Phosphatidylglycerol--prolipoprotein diacylglyceryl transferase</fullName>
        <ecNumber evidence="1">2.5.1.145</ecNumber>
    </recommendedName>
</protein>
<keyword id="KW-1003">Cell membrane</keyword>
<keyword id="KW-0472">Membrane</keyword>
<keyword id="KW-1185">Reference proteome</keyword>
<keyword id="KW-0808">Transferase</keyword>
<keyword id="KW-0812">Transmembrane</keyword>
<keyword id="KW-1133">Transmembrane helix</keyword>
<gene>
    <name evidence="1" type="primary">lgt</name>
    <name type="ordered locus">OB2481</name>
</gene>
<sequence length="287" mass="32763">MLHTAAPIDRVAIEIGPLSIYWYGIIIAFGAILAIYLASKEADRLGLTKDLMLDFVMFAVPIAIIFARIYYVFFEFDQYANGPWWKVFAIWEGGIAIHGAVIGGVITAIVFAKVRKVSFWQIADIVAPSLILGQAIGRWGNFVNQEAHGGPISQATYESFHQYLPDFIMNQMTINGVMYHPTFLYESVWNILIFVGLLLLRKYNPVRGEVFLTYAITYSIGRYFIEGLRTDSLYMFDIIRTAQFISILIIIVSIIFIIYRRKTVSERYLDAPPSNKKKNKKSTKKKK</sequence>
<proteinExistence type="inferred from homology"/>
<comment type="function">
    <text evidence="1">Catalyzes the transfer of the diacylglyceryl group from phosphatidylglycerol to the sulfhydryl group of the N-terminal cysteine of a prolipoprotein, the first step in the formation of mature lipoproteins.</text>
</comment>
<comment type="catalytic activity">
    <reaction evidence="1">
        <text>L-cysteinyl-[prolipoprotein] + a 1,2-diacyl-sn-glycero-3-phospho-(1'-sn-glycerol) = an S-1,2-diacyl-sn-glyceryl-L-cysteinyl-[prolipoprotein] + sn-glycerol 1-phosphate + H(+)</text>
        <dbReference type="Rhea" id="RHEA:56712"/>
        <dbReference type="Rhea" id="RHEA-COMP:14679"/>
        <dbReference type="Rhea" id="RHEA-COMP:14680"/>
        <dbReference type="ChEBI" id="CHEBI:15378"/>
        <dbReference type="ChEBI" id="CHEBI:29950"/>
        <dbReference type="ChEBI" id="CHEBI:57685"/>
        <dbReference type="ChEBI" id="CHEBI:64716"/>
        <dbReference type="ChEBI" id="CHEBI:140658"/>
        <dbReference type="EC" id="2.5.1.145"/>
    </reaction>
</comment>
<comment type="pathway">
    <text evidence="1">Protein modification; lipoprotein biosynthesis (diacylglyceryl transfer).</text>
</comment>
<comment type="subcellular location">
    <subcellularLocation>
        <location evidence="1">Cell membrane</location>
        <topology evidence="1">Multi-pass membrane protein</topology>
    </subcellularLocation>
</comment>
<comment type="similarity">
    <text evidence="1">Belongs to the Lgt family.</text>
</comment>
<accession>Q8CX97</accession>
<name>LGT_OCEIH</name>
<organism>
    <name type="scientific">Oceanobacillus iheyensis (strain DSM 14371 / CIP 107618 / JCM 11309 / KCTC 3954 / HTE831)</name>
    <dbReference type="NCBI Taxonomy" id="221109"/>
    <lineage>
        <taxon>Bacteria</taxon>
        <taxon>Bacillati</taxon>
        <taxon>Bacillota</taxon>
        <taxon>Bacilli</taxon>
        <taxon>Bacillales</taxon>
        <taxon>Bacillaceae</taxon>
        <taxon>Oceanobacillus</taxon>
    </lineage>
</organism>
<evidence type="ECO:0000255" key="1">
    <source>
        <dbReference type="HAMAP-Rule" id="MF_01147"/>
    </source>
</evidence>
<dbReference type="EC" id="2.5.1.145" evidence="1"/>
<dbReference type="EMBL" id="BA000028">
    <property type="protein sequence ID" value="BAC14437.1"/>
    <property type="molecule type" value="Genomic_DNA"/>
</dbReference>
<dbReference type="RefSeq" id="WP_011066874.1">
    <property type="nucleotide sequence ID" value="NC_004193.1"/>
</dbReference>
<dbReference type="SMR" id="Q8CX97"/>
<dbReference type="STRING" id="221109.gene:10734733"/>
<dbReference type="KEGG" id="oih:OB2481"/>
<dbReference type="eggNOG" id="COG0682">
    <property type="taxonomic scope" value="Bacteria"/>
</dbReference>
<dbReference type="HOGENOM" id="CLU_013386_1_2_9"/>
<dbReference type="OrthoDB" id="871140at2"/>
<dbReference type="PhylomeDB" id="Q8CX97"/>
<dbReference type="UniPathway" id="UPA00664"/>
<dbReference type="Proteomes" id="UP000000822">
    <property type="component" value="Chromosome"/>
</dbReference>
<dbReference type="GO" id="GO:0005886">
    <property type="term" value="C:plasma membrane"/>
    <property type="evidence" value="ECO:0007669"/>
    <property type="project" value="UniProtKB-SubCell"/>
</dbReference>
<dbReference type="GO" id="GO:0008961">
    <property type="term" value="F:phosphatidylglycerol-prolipoprotein diacylglyceryl transferase activity"/>
    <property type="evidence" value="ECO:0007669"/>
    <property type="project" value="UniProtKB-UniRule"/>
</dbReference>
<dbReference type="GO" id="GO:0042158">
    <property type="term" value="P:lipoprotein biosynthetic process"/>
    <property type="evidence" value="ECO:0007669"/>
    <property type="project" value="UniProtKB-UniRule"/>
</dbReference>
<dbReference type="HAMAP" id="MF_01147">
    <property type="entry name" value="Lgt"/>
    <property type="match status" value="1"/>
</dbReference>
<dbReference type="InterPro" id="IPR001640">
    <property type="entry name" value="Lgt"/>
</dbReference>
<dbReference type="NCBIfam" id="TIGR00544">
    <property type="entry name" value="lgt"/>
    <property type="match status" value="1"/>
</dbReference>
<dbReference type="PANTHER" id="PTHR30589:SF0">
    <property type="entry name" value="PHOSPHATIDYLGLYCEROL--PROLIPOPROTEIN DIACYLGLYCERYL TRANSFERASE"/>
    <property type="match status" value="1"/>
</dbReference>
<dbReference type="PANTHER" id="PTHR30589">
    <property type="entry name" value="PROLIPOPROTEIN DIACYLGLYCERYL TRANSFERASE"/>
    <property type="match status" value="1"/>
</dbReference>
<dbReference type="Pfam" id="PF01790">
    <property type="entry name" value="LGT"/>
    <property type="match status" value="1"/>
</dbReference>
<dbReference type="PROSITE" id="PS01311">
    <property type="entry name" value="LGT"/>
    <property type="match status" value="1"/>
</dbReference>
<feature type="chain" id="PRO_0000172644" description="Phosphatidylglycerol--prolipoprotein diacylglyceryl transferase">
    <location>
        <begin position="1"/>
        <end position="287"/>
    </location>
</feature>
<feature type="transmembrane region" description="Helical" evidence="1">
    <location>
        <begin position="15"/>
        <end position="35"/>
    </location>
</feature>
<feature type="transmembrane region" description="Helical" evidence="1">
    <location>
        <begin position="55"/>
        <end position="75"/>
    </location>
</feature>
<feature type="transmembrane region" description="Helical" evidence="1">
    <location>
        <begin position="90"/>
        <end position="110"/>
    </location>
</feature>
<feature type="transmembrane region" description="Helical" evidence="1">
    <location>
        <begin position="117"/>
        <end position="137"/>
    </location>
</feature>
<feature type="transmembrane region" description="Helical" evidence="1">
    <location>
        <begin position="180"/>
        <end position="200"/>
    </location>
</feature>
<feature type="transmembrane region" description="Helical" evidence="1">
    <location>
        <begin position="238"/>
        <end position="258"/>
    </location>
</feature>
<feature type="binding site" evidence="1">
    <location>
        <position position="138"/>
    </location>
    <ligand>
        <name>a 1,2-diacyl-sn-glycero-3-phospho-(1'-sn-glycerol)</name>
        <dbReference type="ChEBI" id="CHEBI:64716"/>
    </ligand>
</feature>